<proteinExistence type="inferred from homology"/>
<dbReference type="EC" id="6.1.1.9" evidence="1"/>
<dbReference type="EMBL" id="AE017220">
    <property type="protein sequence ID" value="AAX68237.1"/>
    <property type="molecule type" value="Genomic_DNA"/>
</dbReference>
<dbReference type="RefSeq" id="WP_000416324.1">
    <property type="nucleotide sequence ID" value="NC_006905.1"/>
</dbReference>
<dbReference type="SMR" id="Q57GC5"/>
<dbReference type="KEGG" id="sec:SCH_4331"/>
<dbReference type="HOGENOM" id="CLU_001493_0_2_6"/>
<dbReference type="Proteomes" id="UP000000538">
    <property type="component" value="Chromosome"/>
</dbReference>
<dbReference type="GO" id="GO:0005829">
    <property type="term" value="C:cytosol"/>
    <property type="evidence" value="ECO:0007669"/>
    <property type="project" value="TreeGrafter"/>
</dbReference>
<dbReference type="GO" id="GO:0002161">
    <property type="term" value="F:aminoacyl-tRNA deacylase activity"/>
    <property type="evidence" value="ECO:0007669"/>
    <property type="project" value="InterPro"/>
</dbReference>
<dbReference type="GO" id="GO:0005524">
    <property type="term" value="F:ATP binding"/>
    <property type="evidence" value="ECO:0007669"/>
    <property type="project" value="UniProtKB-UniRule"/>
</dbReference>
<dbReference type="GO" id="GO:0004832">
    <property type="term" value="F:valine-tRNA ligase activity"/>
    <property type="evidence" value="ECO:0007669"/>
    <property type="project" value="UniProtKB-UniRule"/>
</dbReference>
<dbReference type="GO" id="GO:0006438">
    <property type="term" value="P:valyl-tRNA aminoacylation"/>
    <property type="evidence" value="ECO:0007669"/>
    <property type="project" value="UniProtKB-UniRule"/>
</dbReference>
<dbReference type="CDD" id="cd07962">
    <property type="entry name" value="Anticodon_Ia_Val"/>
    <property type="match status" value="1"/>
</dbReference>
<dbReference type="CDD" id="cd00817">
    <property type="entry name" value="ValRS_core"/>
    <property type="match status" value="1"/>
</dbReference>
<dbReference type="FunFam" id="1.10.287.380:FF:000001">
    <property type="entry name" value="Valine--tRNA ligase"/>
    <property type="match status" value="1"/>
</dbReference>
<dbReference type="FunFam" id="1.10.730.10:FF:000007">
    <property type="entry name" value="Valine--tRNA ligase"/>
    <property type="match status" value="1"/>
</dbReference>
<dbReference type="FunFam" id="3.40.50.620:FF:000032">
    <property type="entry name" value="Valine--tRNA ligase"/>
    <property type="match status" value="1"/>
</dbReference>
<dbReference type="FunFam" id="3.40.50.620:FF:000146">
    <property type="entry name" value="Valine--tRNA ligase"/>
    <property type="match status" value="1"/>
</dbReference>
<dbReference type="FunFam" id="3.90.740.10:FF:000021">
    <property type="entry name" value="Valine--tRNA ligase"/>
    <property type="match status" value="1"/>
</dbReference>
<dbReference type="Gene3D" id="3.40.50.620">
    <property type="entry name" value="HUPs"/>
    <property type="match status" value="2"/>
</dbReference>
<dbReference type="Gene3D" id="1.10.730.10">
    <property type="entry name" value="Isoleucyl-tRNA Synthetase, Domain 1"/>
    <property type="match status" value="1"/>
</dbReference>
<dbReference type="Gene3D" id="1.10.287.380">
    <property type="entry name" value="Valyl-tRNA synthetase, C-terminal domain"/>
    <property type="match status" value="1"/>
</dbReference>
<dbReference type="Gene3D" id="3.90.740.10">
    <property type="entry name" value="Valyl/Leucyl/Isoleucyl-tRNA synthetase, editing domain"/>
    <property type="match status" value="1"/>
</dbReference>
<dbReference type="HAMAP" id="MF_02004">
    <property type="entry name" value="Val_tRNA_synth_type1"/>
    <property type="match status" value="1"/>
</dbReference>
<dbReference type="InterPro" id="IPR001412">
    <property type="entry name" value="aa-tRNA-synth_I_CS"/>
</dbReference>
<dbReference type="InterPro" id="IPR002300">
    <property type="entry name" value="aa-tRNA-synth_Ia"/>
</dbReference>
<dbReference type="InterPro" id="IPR033705">
    <property type="entry name" value="Anticodon_Ia_Val"/>
</dbReference>
<dbReference type="InterPro" id="IPR013155">
    <property type="entry name" value="M/V/L/I-tRNA-synth_anticd-bd"/>
</dbReference>
<dbReference type="InterPro" id="IPR014729">
    <property type="entry name" value="Rossmann-like_a/b/a_fold"/>
</dbReference>
<dbReference type="InterPro" id="IPR010978">
    <property type="entry name" value="tRNA-bd_arm"/>
</dbReference>
<dbReference type="InterPro" id="IPR009080">
    <property type="entry name" value="tRNAsynth_Ia_anticodon-bd"/>
</dbReference>
<dbReference type="InterPro" id="IPR037118">
    <property type="entry name" value="Val-tRNA_synth_C_sf"/>
</dbReference>
<dbReference type="InterPro" id="IPR019499">
    <property type="entry name" value="Val-tRNA_synth_tRNA-bd"/>
</dbReference>
<dbReference type="InterPro" id="IPR009008">
    <property type="entry name" value="Val/Leu/Ile-tRNA-synth_edit"/>
</dbReference>
<dbReference type="InterPro" id="IPR002303">
    <property type="entry name" value="Valyl-tRNA_ligase"/>
</dbReference>
<dbReference type="NCBIfam" id="NF004349">
    <property type="entry name" value="PRK05729.1"/>
    <property type="match status" value="1"/>
</dbReference>
<dbReference type="NCBIfam" id="TIGR00422">
    <property type="entry name" value="valS"/>
    <property type="match status" value="1"/>
</dbReference>
<dbReference type="PANTHER" id="PTHR11946:SF93">
    <property type="entry name" value="VALINE--TRNA LIGASE, CHLOROPLASTIC_MITOCHONDRIAL 2"/>
    <property type="match status" value="1"/>
</dbReference>
<dbReference type="PANTHER" id="PTHR11946">
    <property type="entry name" value="VALYL-TRNA SYNTHETASES"/>
    <property type="match status" value="1"/>
</dbReference>
<dbReference type="Pfam" id="PF08264">
    <property type="entry name" value="Anticodon_1"/>
    <property type="match status" value="1"/>
</dbReference>
<dbReference type="Pfam" id="PF00133">
    <property type="entry name" value="tRNA-synt_1"/>
    <property type="match status" value="1"/>
</dbReference>
<dbReference type="Pfam" id="PF10458">
    <property type="entry name" value="Val_tRNA-synt_C"/>
    <property type="match status" value="1"/>
</dbReference>
<dbReference type="PRINTS" id="PR00986">
    <property type="entry name" value="TRNASYNTHVAL"/>
</dbReference>
<dbReference type="SUPFAM" id="SSF47323">
    <property type="entry name" value="Anticodon-binding domain of a subclass of class I aminoacyl-tRNA synthetases"/>
    <property type="match status" value="1"/>
</dbReference>
<dbReference type="SUPFAM" id="SSF52374">
    <property type="entry name" value="Nucleotidylyl transferase"/>
    <property type="match status" value="1"/>
</dbReference>
<dbReference type="SUPFAM" id="SSF46589">
    <property type="entry name" value="tRNA-binding arm"/>
    <property type="match status" value="1"/>
</dbReference>
<dbReference type="SUPFAM" id="SSF50677">
    <property type="entry name" value="ValRS/IleRS/LeuRS editing domain"/>
    <property type="match status" value="1"/>
</dbReference>
<dbReference type="PROSITE" id="PS00178">
    <property type="entry name" value="AA_TRNA_LIGASE_I"/>
    <property type="match status" value="1"/>
</dbReference>
<name>SYV_SALCH</name>
<accession>Q57GC5</accession>
<feature type="chain" id="PRO_0000224549" description="Valine--tRNA ligase">
    <location>
        <begin position="1"/>
        <end position="951"/>
    </location>
</feature>
<feature type="coiled-coil region" evidence="1">
    <location>
        <begin position="882"/>
        <end position="944"/>
    </location>
</feature>
<feature type="short sequence motif" description="'HIGH' region">
    <location>
        <begin position="42"/>
        <end position="52"/>
    </location>
</feature>
<feature type="short sequence motif" description="'KMSKS' region">
    <location>
        <begin position="554"/>
        <end position="558"/>
    </location>
</feature>
<feature type="binding site" evidence="1">
    <location>
        <position position="557"/>
    </location>
    <ligand>
        <name>ATP</name>
        <dbReference type="ChEBI" id="CHEBI:30616"/>
    </ligand>
</feature>
<keyword id="KW-0030">Aminoacyl-tRNA synthetase</keyword>
<keyword id="KW-0067">ATP-binding</keyword>
<keyword id="KW-0175">Coiled coil</keyword>
<keyword id="KW-0963">Cytoplasm</keyword>
<keyword id="KW-0436">Ligase</keyword>
<keyword id="KW-0547">Nucleotide-binding</keyword>
<keyword id="KW-0648">Protein biosynthesis</keyword>
<protein>
    <recommendedName>
        <fullName evidence="1">Valine--tRNA ligase</fullName>
        <ecNumber evidence="1">6.1.1.9</ecNumber>
    </recommendedName>
    <alternativeName>
        <fullName evidence="1">Valyl-tRNA synthetase</fullName>
        <shortName evidence="1">ValRS</shortName>
    </alternativeName>
</protein>
<evidence type="ECO:0000255" key="1">
    <source>
        <dbReference type="HAMAP-Rule" id="MF_02004"/>
    </source>
</evidence>
<reference key="1">
    <citation type="journal article" date="2005" name="Nucleic Acids Res.">
        <title>The genome sequence of Salmonella enterica serovar Choleraesuis, a highly invasive and resistant zoonotic pathogen.</title>
        <authorList>
            <person name="Chiu C.-H."/>
            <person name="Tang P."/>
            <person name="Chu C."/>
            <person name="Hu S."/>
            <person name="Bao Q."/>
            <person name="Yu J."/>
            <person name="Chou Y.-Y."/>
            <person name="Wang H.-S."/>
            <person name="Lee Y.-S."/>
        </authorList>
    </citation>
    <scope>NUCLEOTIDE SEQUENCE [LARGE SCALE GENOMIC DNA]</scope>
    <source>
        <strain>SC-B67</strain>
    </source>
</reference>
<comment type="function">
    <text evidence="1">Catalyzes the attachment of valine to tRNA(Val). As ValRS can inadvertently accommodate and process structurally similar amino acids such as threonine, to avoid such errors, it has a 'posttransfer' editing activity that hydrolyzes mischarged Thr-tRNA(Val) in a tRNA-dependent manner.</text>
</comment>
<comment type="catalytic activity">
    <reaction evidence="1">
        <text>tRNA(Val) + L-valine + ATP = L-valyl-tRNA(Val) + AMP + diphosphate</text>
        <dbReference type="Rhea" id="RHEA:10704"/>
        <dbReference type="Rhea" id="RHEA-COMP:9672"/>
        <dbReference type="Rhea" id="RHEA-COMP:9708"/>
        <dbReference type="ChEBI" id="CHEBI:30616"/>
        <dbReference type="ChEBI" id="CHEBI:33019"/>
        <dbReference type="ChEBI" id="CHEBI:57762"/>
        <dbReference type="ChEBI" id="CHEBI:78442"/>
        <dbReference type="ChEBI" id="CHEBI:78537"/>
        <dbReference type="ChEBI" id="CHEBI:456215"/>
        <dbReference type="EC" id="6.1.1.9"/>
    </reaction>
</comment>
<comment type="subunit">
    <text evidence="1">Monomer.</text>
</comment>
<comment type="subcellular location">
    <subcellularLocation>
        <location evidence="1">Cytoplasm</location>
    </subcellularLocation>
</comment>
<comment type="domain">
    <text evidence="1">ValRS has two distinct active sites: one for aminoacylation and one for editing. The misactivated threonine is translocated from the active site to the editing site.</text>
</comment>
<comment type="domain">
    <text evidence="1">The C-terminal coiled-coil domain is crucial for aminoacylation activity.</text>
</comment>
<comment type="similarity">
    <text evidence="1">Belongs to the class-I aminoacyl-tRNA synthetase family. ValS type 1 subfamily.</text>
</comment>
<sequence length="951" mass="108260">MEKTYNPQDIEQPLYEHWEKQGYFKPNGDESKESFCIMIPPPNVTGSLHMGHAFQQTIMDTMIRYQRMQGKNTLWQVGTDHAGIATQMVVERKIAAEEGKTRHDYGRDAFIDKIWQWKAESGGTITRQMRRLGNSVDWERERFTMDEGLSNAVKEVFVRLYKEDLIYRGKRLVNWDPKLRTAISDLEVENRESKGSMWHIRYPLADGAKTADGKDYLVVATTRPETILGDTGVAVNPEDPRYQSLIGKFVILPLVNRRIPIVGDEHADMEKGTGCVKITPAHDFNDYEVGKRHALPMINILTFDGDIRESAEVFDTKGEESDVYSSEIPAEFQKLERFAARKAIVAAVDALGLLEEIKPHDLTVPYGDRGGVVIEPMLTDQWYVRADVLAKPAVEAVENGDIQFVPKQYENMYFSWMRDIQDWCISRQLWWGHRIPAWYDNDGNVYVGRTEDEVRQENNLGADVALRQDEDVLDTWFSSALWTFSTLGWPENTDALRQFHPTSVMVSGFDIIFFWIARMIMMTMHFIKDENGKPQVPFHTVYMTGLIRDDEGQKMSKSKGNVIDPLDMVDGISLPELLEKRTGNMMQPQMAEKIRKRTEKQFPNGIEPHGTDALRFTLAALASTGRDINWDMKRLEGYRNFCNKLWNASRFVLMNTEEQDCGFNGGEMTLSLADRWILAEFNQTVKAYREALDNFRFDIAAGILYEFTWNQFCDWYLELTKPVMTGGSESELRGTRHTLVTVLEGLLRLAHPIIPFITETIWQRVKVICGITADTIMLQPFPEYNAAQVDEAALADTEWLKQAIVAVRNIRAEMNIAPGKPLELLLRGCSEEAVRRVNDNRSFLQTLARLESITVLPADDKGPVSVTKIIDGAELLIPMAGLINKDDELARLAKEVAKIEGEIARIEGKLSNEGFVARAPEAVIAKEREKLDSYAEAKAKLIEQQAVISAL</sequence>
<gene>
    <name evidence="1" type="primary">valS</name>
    <name type="ordered locus">SCH_4331</name>
</gene>
<organism>
    <name type="scientific">Salmonella choleraesuis (strain SC-B67)</name>
    <dbReference type="NCBI Taxonomy" id="321314"/>
    <lineage>
        <taxon>Bacteria</taxon>
        <taxon>Pseudomonadati</taxon>
        <taxon>Pseudomonadota</taxon>
        <taxon>Gammaproteobacteria</taxon>
        <taxon>Enterobacterales</taxon>
        <taxon>Enterobacteriaceae</taxon>
        <taxon>Salmonella</taxon>
    </lineage>
</organism>